<organism>
    <name type="scientific">Homo sapiens</name>
    <name type="common">Human</name>
    <dbReference type="NCBI Taxonomy" id="9606"/>
    <lineage>
        <taxon>Eukaryota</taxon>
        <taxon>Metazoa</taxon>
        <taxon>Chordata</taxon>
        <taxon>Craniata</taxon>
        <taxon>Vertebrata</taxon>
        <taxon>Euteleostomi</taxon>
        <taxon>Mammalia</taxon>
        <taxon>Eutheria</taxon>
        <taxon>Euarchontoglires</taxon>
        <taxon>Primates</taxon>
        <taxon>Haplorrhini</taxon>
        <taxon>Catarrhini</taxon>
        <taxon>Hominidae</taxon>
        <taxon>Homo</taxon>
    </lineage>
</organism>
<evidence type="ECO:0000250" key="1"/>
<evidence type="ECO:0000250" key="2">
    <source>
        <dbReference type="UniProtKB" id="Q61210"/>
    </source>
</evidence>
<evidence type="ECO:0000255" key="3"/>
<evidence type="ECO:0000255" key="4">
    <source>
        <dbReference type="PROSITE-ProRule" id="PRU00062"/>
    </source>
</evidence>
<evidence type="ECO:0000255" key="5">
    <source>
        <dbReference type="PROSITE-ProRule" id="PRU00145"/>
    </source>
</evidence>
<evidence type="ECO:0000256" key="6">
    <source>
        <dbReference type="SAM" id="MobiDB-lite"/>
    </source>
</evidence>
<evidence type="ECO:0000269" key="7">
    <source>
    </source>
</evidence>
<evidence type="ECO:0000269" key="8">
    <source>
    </source>
</evidence>
<evidence type="ECO:0000269" key="9">
    <source>
    </source>
</evidence>
<evidence type="ECO:0000269" key="10">
    <source>
    </source>
</evidence>
<evidence type="ECO:0000269" key="11">
    <source>
    </source>
</evidence>
<evidence type="ECO:0000269" key="12">
    <source>
    </source>
</evidence>
<evidence type="ECO:0000269" key="13">
    <source>
    </source>
</evidence>
<evidence type="ECO:0000269" key="14">
    <source>
    </source>
</evidence>
<evidence type="ECO:0000269" key="15">
    <source>
    </source>
</evidence>
<evidence type="ECO:0000269" key="16">
    <source>
    </source>
</evidence>
<evidence type="ECO:0000303" key="17">
    <source>
    </source>
</evidence>
<evidence type="ECO:0000305" key="18"/>
<evidence type="ECO:0007744" key="19">
    <source>
    </source>
</evidence>
<evidence type="ECO:0007744" key="20">
    <source>
    </source>
</evidence>
<evidence type="ECO:0007744" key="21">
    <source>
    </source>
</evidence>
<evidence type="ECO:0007744" key="22">
    <source>
    </source>
</evidence>
<evidence type="ECO:0007829" key="23">
    <source>
        <dbReference type="PDB" id="1IAP"/>
    </source>
</evidence>
<evidence type="ECO:0007829" key="24">
    <source>
        <dbReference type="PDB" id="1SHZ"/>
    </source>
</evidence>
<evidence type="ECO:0007829" key="25">
    <source>
        <dbReference type="PDB" id="3AB3"/>
    </source>
</evidence>
<evidence type="ECO:0007829" key="26">
    <source>
        <dbReference type="PDB" id="3ODO"/>
    </source>
</evidence>
<evidence type="ECO:0007829" key="27">
    <source>
        <dbReference type="PDB" id="3ODX"/>
    </source>
</evidence>
<evidence type="ECO:0007829" key="28">
    <source>
        <dbReference type="PDB" id="3P6A"/>
    </source>
</evidence>
<accession>Q92888</accession>
<accession>O00513</accession>
<accession>Q6NX52</accession>
<accession>Q8N4J4</accession>
<accession>Q96BF4</accession>
<accession>Q96F17</accession>
<accession>Q9BSB1</accession>
<keyword id="KW-0002">3D-structure</keyword>
<keyword id="KW-0025">Alternative splicing</keyword>
<keyword id="KW-0175">Coiled coil</keyword>
<keyword id="KW-0963">Cytoplasm</keyword>
<keyword id="KW-0343">GTPase activation</keyword>
<keyword id="KW-0344">Guanine-nucleotide releasing factor</keyword>
<keyword id="KW-0472">Membrane</keyword>
<keyword id="KW-0597">Phosphoprotein</keyword>
<keyword id="KW-1267">Proteomics identification</keyword>
<keyword id="KW-1185">Reference proteome</keyword>
<comment type="function">
    <text evidence="2 11 12 13 15 16">Seems to play a role in the regulation of RhoA GTPase by guanine nucleotide-binding alpha-12 (GNA12) and alpha-13 (GNA13) subunits (PubMed:9641915, PubMed:9641916). Acts as a GTPase-activating protein (GAP) for GNA12 and GNA13, and as guanine nucleotide exchange factor (GEF) for RhoA GTPase (PubMed:30521495, PubMed:8810315, PubMed:9641915, PubMed:9641916). Activated G alpha 13/GNA13 stimulates the RhoGEF activity through interaction with the RGS-like domain (PubMed:9641916). This GEF activity is inhibited by binding to activated GNA12 (PubMed:9641916). Mediates angiotensin-2-induced RhoA activation (PubMed:20098430). In lymphoid follicles, may trigger activation of GNA13 as part of S1PR2-dependent signaling pathway that leads to inhibition of germinal center (GC) B cell growth and migration outside the GC niche.</text>
</comment>
<comment type="subunit">
    <text evidence="1 8 13 16">Interacts with RHOA, GNA12 and GNA13. Homooligomerizes through the coiled coil region. May interact with CCPG1 (By similarity). Interacts with CTNNAL1.</text>
</comment>
<comment type="interaction">
    <interactant intactId="EBI-465400">
        <id>Q92888</id>
    </interactant>
    <interactant intactId="EBI-465387">
        <id>Q14344</id>
        <label>GNA13</label>
    </interactant>
    <organismsDiffer>false</organismsDiffer>
    <experiments>3</experiments>
</comment>
<comment type="interaction">
    <interactant intactId="EBI-465400">
        <id>Q92888</id>
    </interactant>
    <interactant intactId="EBI-533224">
        <id>P15884</id>
        <label>TCF4</label>
    </interactant>
    <organismsDiffer>false</organismsDiffer>
    <experiments>3</experiments>
</comment>
<comment type="interaction">
    <interactant intactId="EBI-465400">
        <id>Q92888</id>
    </interactant>
    <interactant intactId="EBI-7864788">
        <id>Q7DB74</id>
        <label>espH</label>
    </interactant>
    <organismsDiffer>true</organismsDiffer>
    <experiments>7</experiments>
</comment>
<comment type="subcellular location">
    <subcellularLocation>
        <location evidence="7">Cytoplasm</location>
    </subcellularLocation>
    <subcellularLocation>
        <location evidence="7">Membrane</location>
    </subcellularLocation>
    <text>Translocated to the membrane by activated GNA13 or LPA stimulation.</text>
</comment>
<comment type="alternative products">
    <event type="alternative splicing"/>
    <isoform>
        <id>Q92888-1</id>
        <name>1</name>
        <sequence type="displayed"/>
    </isoform>
    <isoform>
        <id>Q92888-2</id>
        <name>2</name>
        <sequence type="described" ref="VSP_008125"/>
    </isoform>
    <isoform>
        <id>Q92888-3</id>
        <name>3</name>
        <sequence type="described" ref="VSP_037766"/>
    </isoform>
    <isoform>
        <id>Q92888-4</id>
        <name>4</name>
        <sequence type="described" ref="VSP_037766 VSP_008125 VSP_057289"/>
    </isoform>
</comment>
<comment type="tissue specificity">
    <text evidence="13 14">Ubiquitously expressed.</text>
</comment>
<comment type="domain">
    <text>The RGSL domain, also known as rgRGS domain, is necessary but not sufficient for GAP activity.</text>
</comment>
<comment type="domain">
    <text evidence="1">The DH domain is involved in interaction with CCPG1.</text>
</comment>
<comment type="PTM">
    <text evidence="9 11">Phosphorylated by PKCA. Angiotensin-2 induced Tyr-738 phosphorylation is mediated by JAK2.</text>
</comment>
<comment type="disease" evidence="12">
    <disease id="DI-05587">
        <name>Immunodeficiency 62</name>
        <acronym>IMD62</acronym>
        <description>An autosomal recessive, primary immunologic disorder characterized by recurrent severe respiratory tract infections and bronchiectasis, due to antibody deficiency. Affected individuals have an abnormal B cell immunophenotype, with low levels of circulating memory B cells.</description>
        <dbReference type="MIM" id="618459"/>
    </disease>
    <text>The disease is caused by variants affecting the gene represented in this entry.</text>
</comment>
<comment type="sequence caution" evidence="18">
    <conflict type="frameshift">
        <sequence resource="EMBL-CDS" id="CAA70356"/>
    </conflict>
</comment>
<comment type="sequence caution" evidence="18">
    <conflict type="miscellaneous discrepancy">
        <sequence resource="EMBL-CDS" id="CAA70356"/>
    </conflict>
    <text>Contaminating sequence. Sequence of unknown origin in the N-terminal part.</text>
</comment>
<dbReference type="EMBL" id="U64105">
    <property type="protein sequence ID" value="AAB17896.1"/>
    <property type="molecule type" value="mRNA"/>
</dbReference>
<dbReference type="EMBL" id="AC010616">
    <property type="status" value="NOT_ANNOTATED_CDS"/>
    <property type="molecule type" value="Genomic_DNA"/>
</dbReference>
<dbReference type="EMBL" id="AC243967">
    <property type="status" value="NOT_ANNOTATED_CDS"/>
    <property type="molecule type" value="Genomic_DNA"/>
</dbReference>
<dbReference type="EMBL" id="CH471126">
    <property type="protein sequence ID" value="EAW57084.1"/>
    <property type="molecule type" value="Genomic_DNA"/>
</dbReference>
<dbReference type="EMBL" id="BC005155">
    <property type="protein sequence ID" value="AAH05155.2"/>
    <property type="molecule type" value="mRNA"/>
</dbReference>
<dbReference type="EMBL" id="BC011726">
    <property type="protein sequence ID" value="AAH11726.1"/>
    <property type="molecule type" value="mRNA"/>
</dbReference>
<dbReference type="EMBL" id="BC015652">
    <property type="status" value="NOT_ANNOTATED_CDS"/>
    <property type="molecule type" value="mRNA"/>
</dbReference>
<dbReference type="EMBL" id="BC034013">
    <property type="protein sequence ID" value="AAH34013.2"/>
    <property type="molecule type" value="mRNA"/>
</dbReference>
<dbReference type="EMBL" id="BC067262">
    <property type="protein sequence ID" value="AAH67262.1"/>
    <property type="molecule type" value="mRNA"/>
</dbReference>
<dbReference type="EMBL" id="Y09160">
    <property type="protein sequence ID" value="CAA70356.1"/>
    <property type="status" value="ALT_SEQ"/>
    <property type="molecule type" value="mRNA"/>
</dbReference>
<dbReference type="EMBL" id="BT007421">
    <property type="protein sequence ID" value="AAP36089.1"/>
    <property type="molecule type" value="mRNA"/>
</dbReference>
<dbReference type="CCDS" id="CCDS12590.1">
    <molecule id="Q92888-3"/>
</dbReference>
<dbReference type="CCDS" id="CCDS12591.1">
    <molecule id="Q92888-1"/>
</dbReference>
<dbReference type="CCDS" id="CCDS12592.1">
    <molecule id="Q92888-2"/>
</dbReference>
<dbReference type="RefSeq" id="NP_004697.2">
    <molecule id="Q92888-1"/>
    <property type="nucleotide sequence ID" value="NM_004706.3"/>
</dbReference>
<dbReference type="RefSeq" id="NP_945328.1">
    <molecule id="Q92888-2"/>
    <property type="nucleotide sequence ID" value="NM_198977.2"/>
</dbReference>
<dbReference type="RefSeq" id="NP_945353.1">
    <molecule id="Q92888-3"/>
    <property type="nucleotide sequence ID" value="NM_199002.2"/>
</dbReference>
<dbReference type="PDB" id="1IAP">
    <property type="method" value="X-ray"/>
    <property type="resolution" value="1.90 A"/>
    <property type="chains" value="A=42-252"/>
</dbReference>
<dbReference type="PDB" id="1SHZ">
    <property type="method" value="X-ray"/>
    <property type="resolution" value="2.85 A"/>
    <property type="chains" value="C/F=7-239"/>
</dbReference>
<dbReference type="PDB" id="3AB3">
    <property type="method" value="X-ray"/>
    <property type="resolution" value="2.40 A"/>
    <property type="chains" value="B/D=1-233"/>
</dbReference>
<dbReference type="PDB" id="3ODO">
    <property type="method" value="X-ray"/>
    <property type="resolution" value="2.90 A"/>
    <property type="chains" value="A/B=395-766"/>
</dbReference>
<dbReference type="PDB" id="3ODW">
    <property type="method" value="X-ray"/>
    <property type="resolution" value="3.20 A"/>
    <property type="chains" value="A/B=240-766"/>
</dbReference>
<dbReference type="PDB" id="3ODX">
    <property type="method" value="X-ray"/>
    <property type="resolution" value="3.20 A"/>
    <property type="chains" value="A/B=353-766"/>
</dbReference>
<dbReference type="PDB" id="3P6A">
    <property type="method" value="X-ray"/>
    <property type="resolution" value="2.50 A"/>
    <property type="chains" value="A/B=395-766"/>
</dbReference>
<dbReference type="PDBsum" id="1IAP"/>
<dbReference type="PDBsum" id="1SHZ"/>
<dbReference type="PDBsum" id="3AB3"/>
<dbReference type="PDBsum" id="3ODO"/>
<dbReference type="PDBsum" id="3ODW"/>
<dbReference type="PDBsum" id="3ODX"/>
<dbReference type="PDBsum" id="3P6A"/>
<dbReference type="SMR" id="Q92888"/>
<dbReference type="BioGRID" id="114585">
    <property type="interactions" value="162"/>
</dbReference>
<dbReference type="CORUM" id="Q92888"/>
<dbReference type="FunCoup" id="Q92888">
    <property type="interactions" value="937"/>
</dbReference>
<dbReference type="IntAct" id="Q92888">
    <property type="interactions" value="68"/>
</dbReference>
<dbReference type="MINT" id="Q92888"/>
<dbReference type="STRING" id="9606.ENSP00000337261"/>
<dbReference type="BindingDB" id="Q92888"/>
<dbReference type="ChEMBL" id="CHEMBL4295918"/>
<dbReference type="GlyGen" id="Q92888">
    <property type="glycosylation" value="1 site, 1 O-linked glycan (1 site)"/>
</dbReference>
<dbReference type="iPTMnet" id="Q92888"/>
<dbReference type="MetOSite" id="Q92888"/>
<dbReference type="PhosphoSitePlus" id="Q92888"/>
<dbReference type="BioMuta" id="ARHGEF1"/>
<dbReference type="DMDM" id="34395524"/>
<dbReference type="CPTAC" id="CPTAC-1231"/>
<dbReference type="jPOST" id="Q92888"/>
<dbReference type="MassIVE" id="Q92888"/>
<dbReference type="PaxDb" id="9606-ENSP00000337261"/>
<dbReference type="PeptideAtlas" id="Q92888"/>
<dbReference type="ProteomicsDB" id="66748"/>
<dbReference type="ProteomicsDB" id="75572">
    <molecule id="Q92888-1"/>
</dbReference>
<dbReference type="ProteomicsDB" id="75573">
    <molecule id="Q92888-2"/>
</dbReference>
<dbReference type="ProteomicsDB" id="75574">
    <molecule id="Q92888-3"/>
</dbReference>
<dbReference type="Pumba" id="Q92888"/>
<dbReference type="Antibodypedia" id="2765">
    <property type="antibodies" value="280 antibodies from 34 providers"/>
</dbReference>
<dbReference type="DNASU" id="9138"/>
<dbReference type="Ensembl" id="ENST00000337665.8">
    <molecule id="Q92888-3"/>
    <property type="protein sequence ID" value="ENSP00000337261.3"/>
    <property type="gene ID" value="ENSG00000076928.20"/>
</dbReference>
<dbReference type="Ensembl" id="ENST00000347545.8">
    <molecule id="Q92888-2"/>
    <property type="protein sequence ID" value="ENSP00000344429.3"/>
    <property type="gene ID" value="ENSG00000076928.20"/>
</dbReference>
<dbReference type="Ensembl" id="ENST00000354532.8">
    <molecule id="Q92888-1"/>
    <property type="protein sequence ID" value="ENSP00000346532.3"/>
    <property type="gene ID" value="ENSG00000076928.20"/>
</dbReference>
<dbReference type="Ensembl" id="ENST00000378152.8">
    <molecule id="Q92888-4"/>
    <property type="protein sequence ID" value="ENSP00000367394.3"/>
    <property type="gene ID" value="ENSG00000076928.20"/>
</dbReference>
<dbReference type="GeneID" id="9138"/>
<dbReference type="KEGG" id="hsa:9138"/>
<dbReference type="MANE-Select" id="ENST00000354532.8">
    <property type="protein sequence ID" value="ENSP00000346532.3"/>
    <property type="RefSeq nucleotide sequence ID" value="NM_004706.4"/>
    <property type="RefSeq protein sequence ID" value="NP_004697.2"/>
</dbReference>
<dbReference type="UCSC" id="uc002orx.4">
    <molecule id="Q92888-1"/>
    <property type="organism name" value="human"/>
</dbReference>
<dbReference type="AGR" id="HGNC:681"/>
<dbReference type="CTD" id="9138"/>
<dbReference type="DisGeNET" id="9138"/>
<dbReference type="GeneCards" id="ARHGEF1"/>
<dbReference type="HGNC" id="HGNC:681">
    <property type="gene designation" value="ARHGEF1"/>
</dbReference>
<dbReference type="HPA" id="ENSG00000076928">
    <property type="expression patterns" value="Tissue enhanced (lymphoid)"/>
</dbReference>
<dbReference type="MalaCards" id="ARHGEF1"/>
<dbReference type="MIM" id="601855">
    <property type="type" value="gene"/>
</dbReference>
<dbReference type="MIM" id="618459">
    <property type="type" value="phenotype"/>
</dbReference>
<dbReference type="neXtProt" id="NX_Q92888"/>
<dbReference type="OpenTargets" id="ENSG00000076928"/>
<dbReference type="PharmGKB" id="PA24966"/>
<dbReference type="VEuPathDB" id="HostDB:ENSG00000076928"/>
<dbReference type="eggNOG" id="KOG3520">
    <property type="taxonomic scope" value="Eukaryota"/>
</dbReference>
<dbReference type="GeneTree" id="ENSGT00940000161180"/>
<dbReference type="HOGENOM" id="CLU_003962_2_0_1"/>
<dbReference type="InParanoid" id="Q92888"/>
<dbReference type="OrthoDB" id="2272012at2759"/>
<dbReference type="PAN-GO" id="Q92888">
    <property type="GO annotations" value="4 GO annotations based on evolutionary models"/>
</dbReference>
<dbReference type="PhylomeDB" id="Q92888"/>
<dbReference type="TreeFam" id="TF106495"/>
<dbReference type="PathwayCommons" id="Q92888"/>
<dbReference type="Reactome" id="R-HSA-193648">
    <property type="pathway name" value="NRAGE signals death through JNK"/>
</dbReference>
<dbReference type="Reactome" id="R-HSA-416482">
    <property type="pathway name" value="G alpha (12/13) signalling events"/>
</dbReference>
<dbReference type="Reactome" id="R-HSA-8980692">
    <property type="pathway name" value="RHOA GTPase cycle"/>
</dbReference>
<dbReference type="Reactome" id="R-HSA-9013026">
    <property type="pathway name" value="RHOB GTPase cycle"/>
</dbReference>
<dbReference type="Reactome" id="R-HSA-9013106">
    <property type="pathway name" value="RHOC GTPase cycle"/>
</dbReference>
<dbReference type="SignaLink" id="Q92888"/>
<dbReference type="SIGNOR" id="Q92888"/>
<dbReference type="BioGRID-ORCS" id="9138">
    <property type="hits" value="20 hits in 1163 CRISPR screens"/>
</dbReference>
<dbReference type="ChiTaRS" id="ARHGEF1">
    <property type="organism name" value="human"/>
</dbReference>
<dbReference type="EvolutionaryTrace" id="Q92888"/>
<dbReference type="GeneWiki" id="ARHGEF1"/>
<dbReference type="GenomeRNAi" id="9138"/>
<dbReference type="Pharos" id="Q92888">
    <property type="development level" value="Tbio"/>
</dbReference>
<dbReference type="PRO" id="PR:Q92888"/>
<dbReference type="Proteomes" id="UP000005640">
    <property type="component" value="Chromosome 19"/>
</dbReference>
<dbReference type="RNAct" id="Q92888">
    <property type="molecule type" value="protein"/>
</dbReference>
<dbReference type="Bgee" id="ENSG00000076928">
    <property type="expression patterns" value="Expressed in granulocyte and 186 other cell types or tissues"/>
</dbReference>
<dbReference type="ExpressionAtlas" id="Q92888">
    <property type="expression patterns" value="baseline and differential"/>
</dbReference>
<dbReference type="GO" id="GO:0005737">
    <property type="term" value="C:cytoplasm"/>
    <property type="evidence" value="ECO:0000318"/>
    <property type="project" value="GO_Central"/>
</dbReference>
<dbReference type="GO" id="GO:0005829">
    <property type="term" value="C:cytosol"/>
    <property type="evidence" value="ECO:0000314"/>
    <property type="project" value="HPA"/>
</dbReference>
<dbReference type="GO" id="GO:0005886">
    <property type="term" value="C:plasma membrane"/>
    <property type="evidence" value="ECO:0000314"/>
    <property type="project" value="HPA"/>
</dbReference>
<dbReference type="GO" id="GO:0001664">
    <property type="term" value="F:G protein-coupled receptor binding"/>
    <property type="evidence" value="ECO:0000318"/>
    <property type="project" value="GO_Central"/>
</dbReference>
<dbReference type="GO" id="GO:0005096">
    <property type="term" value="F:GTPase activator activity"/>
    <property type="evidence" value="ECO:0007669"/>
    <property type="project" value="UniProtKB-KW"/>
</dbReference>
<dbReference type="GO" id="GO:0005085">
    <property type="term" value="F:guanyl-nucleotide exchange factor activity"/>
    <property type="evidence" value="ECO:0000314"/>
    <property type="project" value="UniProtKB"/>
</dbReference>
<dbReference type="GO" id="GO:0003723">
    <property type="term" value="F:RNA binding"/>
    <property type="evidence" value="ECO:0007005"/>
    <property type="project" value="UniProtKB"/>
</dbReference>
<dbReference type="GO" id="GO:0007186">
    <property type="term" value="P:G protein-coupled receptor signaling pathway"/>
    <property type="evidence" value="ECO:0000318"/>
    <property type="project" value="GO_Central"/>
</dbReference>
<dbReference type="GO" id="GO:0051056">
    <property type="term" value="P:regulation of small GTPase mediated signal transduction"/>
    <property type="evidence" value="ECO:0000304"/>
    <property type="project" value="Reactome"/>
</dbReference>
<dbReference type="GO" id="GO:0007266">
    <property type="term" value="P:Rho protein signal transduction"/>
    <property type="evidence" value="ECO:0000304"/>
    <property type="project" value="ProtInc"/>
</dbReference>
<dbReference type="GO" id="GO:0160221">
    <property type="term" value="P:Rho-activating G protein-coupled receptor signaling pathway"/>
    <property type="evidence" value="ECO:0000314"/>
    <property type="project" value="UniProtKB"/>
</dbReference>
<dbReference type="CDD" id="cd14679">
    <property type="entry name" value="PH_p115RhoGEF"/>
    <property type="match status" value="1"/>
</dbReference>
<dbReference type="CDD" id="cd08755">
    <property type="entry name" value="RGS_p115RhoGEF"/>
    <property type="match status" value="1"/>
</dbReference>
<dbReference type="CDD" id="cd00160">
    <property type="entry name" value="RhoGEF"/>
    <property type="match status" value="1"/>
</dbReference>
<dbReference type="FunFam" id="1.20.900.10:FF:000006">
    <property type="entry name" value="Rho guanine nucleotide exchange factor (GEF) 11"/>
    <property type="match status" value="1"/>
</dbReference>
<dbReference type="FunFam" id="1.10.167.10:FF:000012">
    <property type="entry name" value="Rho guanine nucleotide exchange factor 1"/>
    <property type="match status" value="1"/>
</dbReference>
<dbReference type="FunFam" id="2.30.29.30:FF:000072">
    <property type="entry name" value="Rho guanine nucleotide exchange factor 1"/>
    <property type="match status" value="1"/>
</dbReference>
<dbReference type="Gene3D" id="1.20.900.10">
    <property type="entry name" value="Dbl homology (DH) domain"/>
    <property type="match status" value="1"/>
</dbReference>
<dbReference type="Gene3D" id="2.30.29.30">
    <property type="entry name" value="Pleckstrin-homology domain (PH domain)/Phosphotyrosine-binding domain (PTB)"/>
    <property type="match status" value="1"/>
</dbReference>
<dbReference type="Gene3D" id="1.10.167.10">
    <property type="entry name" value="Regulator of G-protein Signalling 4, domain 2"/>
    <property type="match status" value="1"/>
</dbReference>
<dbReference type="InterPro" id="IPR035899">
    <property type="entry name" value="DBL_dom_sf"/>
</dbReference>
<dbReference type="InterPro" id="IPR000219">
    <property type="entry name" value="DH_dom"/>
</dbReference>
<dbReference type="InterPro" id="IPR037887">
    <property type="entry name" value="p115RhoGEF_RGS"/>
</dbReference>
<dbReference type="InterPro" id="IPR011993">
    <property type="entry name" value="PH-like_dom_sf"/>
</dbReference>
<dbReference type="InterPro" id="IPR041020">
    <property type="entry name" value="PH_16"/>
</dbReference>
<dbReference type="InterPro" id="IPR001849">
    <property type="entry name" value="PH_domain"/>
</dbReference>
<dbReference type="InterPro" id="IPR015212">
    <property type="entry name" value="RGS-like_dom"/>
</dbReference>
<dbReference type="InterPro" id="IPR036305">
    <property type="entry name" value="RGS_sf"/>
</dbReference>
<dbReference type="InterPro" id="IPR044926">
    <property type="entry name" value="RGS_subdomain_2"/>
</dbReference>
<dbReference type="PANTHER" id="PTHR45872:SF4">
    <property type="entry name" value="RHO GUANINE NUCLEOTIDE EXCHANGE FACTOR 1"/>
    <property type="match status" value="1"/>
</dbReference>
<dbReference type="PANTHER" id="PTHR45872">
    <property type="entry name" value="RHO GUANINE NUCLEOTIDE EXCHANGE FACTOR 2, ISOFORM D"/>
    <property type="match status" value="1"/>
</dbReference>
<dbReference type="Pfam" id="PF17838">
    <property type="entry name" value="PH_16"/>
    <property type="match status" value="1"/>
</dbReference>
<dbReference type="Pfam" id="PF09128">
    <property type="entry name" value="RGS-like"/>
    <property type="match status" value="1"/>
</dbReference>
<dbReference type="Pfam" id="PF00621">
    <property type="entry name" value="RhoGEF"/>
    <property type="match status" value="1"/>
</dbReference>
<dbReference type="SMART" id="SM00233">
    <property type="entry name" value="PH"/>
    <property type="match status" value="1"/>
</dbReference>
<dbReference type="SMART" id="SM00325">
    <property type="entry name" value="RhoGEF"/>
    <property type="match status" value="1"/>
</dbReference>
<dbReference type="SUPFAM" id="SSF48065">
    <property type="entry name" value="DBL homology domain (DH-domain)"/>
    <property type="match status" value="1"/>
</dbReference>
<dbReference type="SUPFAM" id="SSF50729">
    <property type="entry name" value="PH domain-like"/>
    <property type="match status" value="1"/>
</dbReference>
<dbReference type="SUPFAM" id="SSF48097">
    <property type="entry name" value="Regulator of G-protein signaling, RGS"/>
    <property type="match status" value="1"/>
</dbReference>
<dbReference type="PROSITE" id="PS50010">
    <property type="entry name" value="DH_2"/>
    <property type="match status" value="1"/>
</dbReference>
<dbReference type="PROSITE" id="PS50003">
    <property type="entry name" value="PH_DOMAIN"/>
    <property type="match status" value="1"/>
</dbReference>
<name>ARHG1_HUMAN</name>
<protein>
    <recommendedName>
        <fullName>Rho guanine nucleotide exchange factor 1</fullName>
    </recommendedName>
    <alternativeName>
        <fullName>115 kDa guanine nucleotide exchange factor</fullName>
        <shortName>p115-RhoGEF</shortName>
        <shortName>p115RhoGEF</shortName>
    </alternativeName>
    <alternativeName>
        <fullName>Sub1.5</fullName>
    </alternativeName>
</protein>
<proteinExistence type="evidence at protein level"/>
<gene>
    <name type="primary">ARHGEF1</name>
</gene>
<sequence length="912" mass="102435">MEDFARGAASPGPSRPGLVPVSIIGAEDEDFENELETNSEEQNSQFQSLEQVKRRPAHLMALLQHVALQFEPGPLLCCLHADMLGSLGPKEAKKAFLDFYHSFLEKTAVLRVPVPPNVAFELDRTRADLISEDVQRRFVQEVVQSQQVAVGRQLEDFRSKRLMGMTPWEQELAQLEAWVGRDRASYEARERHVAERLLMHLEEMQHTISTDEEKSAAVVNAIGLYMRHLGVRTKSGDKKSGRNFFRKKVMGNRRSDEPAKTKKGLSSILDAARWNRGEPQVPDFRHLKAEVDAEKPGATDRKGGVGMPSRDRNIGAPGQDTPGVSLHPLSLDSPDREPGADAPLELGDSSPQGPMSLESLAPPESTDEGAETESPEPGDEGEPGRSGLELEPEEPPGWRELVPPDTLHSLPKSQVKRQEVISELLVTEAAHVRMLRVLHDLFFQPMAECLFFPLEELQNIFPSLDELIEVHSLFLDRLMKRRQESGYLIEEIGDVLLARFDGAEGSWFQKISSRFCSRQSFALEQLKAKQRKDPRFCAFVQEAESRPRCRRLQLKDMIPTEMQRLTKYPLLLQSIGQNTEEPTEREKVELAAECCREILHHVNQAVRDMEDLLRLKDYQRRLDLSHLRQSSDPMLSEFKNLDITKKKLVHEGPLTWRVTKDKAVEVHVLLLDDLLLLLQRQDERLLLKSHSRTLTPTPDGKTMLRPVLRLTSAMTREVATDHKAFYVLFTWDQEAQIYELVAQTVSERKNWCALITETAGSLKVPAPASRPKPRPSPSSTREPLLSSSENGNGGRETSPADARTERILSDLLPFCRPGPEGQLAATALRKVLSLKQLLFPAEEDNGAGPPRDGDGVPGGGPLSPARTQEIQENLLSLEETMKQLEELEEEFCRLRPLLSQLGGNSVPQPGCT</sequence>
<reference key="1">
    <citation type="journal article" date="1996" name="J. Biol. Chem.">
        <title>Identification of a novel guanine nucleotide exchange factor for the rho GTPase.</title>
        <authorList>
            <person name="Hart M.J."/>
            <person name="Sharma S."/>
            <person name="el Masry N."/>
            <person name="Qiu R.-G."/>
            <person name="McCabe P."/>
            <person name="Polakis P."/>
            <person name="Bollag G."/>
        </authorList>
    </citation>
    <scope>NUCLEOTIDE SEQUENCE [MRNA] (ISOFORM 1)</scope>
    <scope>FUNCTION</scope>
    <scope>INTERACTION WITH RHOA</scope>
    <scope>TISSUE SPECIFICITY</scope>
</reference>
<reference key="2">
    <citation type="journal article" date="2004" name="Nature">
        <title>The DNA sequence and biology of human chromosome 19.</title>
        <authorList>
            <person name="Grimwood J."/>
            <person name="Gordon L.A."/>
            <person name="Olsen A.S."/>
            <person name="Terry A."/>
            <person name="Schmutz J."/>
            <person name="Lamerdin J.E."/>
            <person name="Hellsten U."/>
            <person name="Goodstein D."/>
            <person name="Couronne O."/>
            <person name="Tran-Gyamfi M."/>
            <person name="Aerts A."/>
            <person name="Altherr M."/>
            <person name="Ashworth L."/>
            <person name="Bajorek E."/>
            <person name="Black S."/>
            <person name="Branscomb E."/>
            <person name="Caenepeel S."/>
            <person name="Carrano A.V."/>
            <person name="Caoile C."/>
            <person name="Chan Y.M."/>
            <person name="Christensen M."/>
            <person name="Cleland C.A."/>
            <person name="Copeland A."/>
            <person name="Dalin E."/>
            <person name="Dehal P."/>
            <person name="Denys M."/>
            <person name="Detter J.C."/>
            <person name="Escobar J."/>
            <person name="Flowers D."/>
            <person name="Fotopulos D."/>
            <person name="Garcia C."/>
            <person name="Georgescu A.M."/>
            <person name="Glavina T."/>
            <person name="Gomez M."/>
            <person name="Gonzales E."/>
            <person name="Groza M."/>
            <person name="Hammon N."/>
            <person name="Hawkins T."/>
            <person name="Haydu L."/>
            <person name="Ho I."/>
            <person name="Huang W."/>
            <person name="Israni S."/>
            <person name="Jett J."/>
            <person name="Kadner K."/>
            <person name="Kimball H."/>
            <person name="Kobayashi A."/>
            <person name="Larionov V."/>
            <person name="Leem S.-H."/>
            <person name="Lopez F."/>
            <person name="Lou Y."/>
            <person name="Lowry S."/>
            <person name="Malfatti S."/>
            <person name="Martinez D."/>
            <person name="McCready P.M."/>
            <person name="Medina C."/>
            <person name="Morgan J."/>
            <person name="Nelson K."/>
            <person name="Nolan M."/>
            <person name="Ovcharenko I."/>
            <person name="Pitluck S."/>
            <person name="Pollard M."/>
            <person name="Popkie A.P."/>
            <person name="Predki P."/>
            <person name="Quan G."/>
            <person name="Ramirez L."/>
            <person name="Rash S."/>
            <person name="Retterer J."/>
            <person name="Rodriguez A."/>
            <person name="Rogers S."/>
            <person name="Salamov A."/>
            <person name="Salazar A."/>
            <person name="She X."/>
            <person name="Smith D."/>
            <person name="Slezak T."/>
            <person name="Solovyev V."/>
            <person name="Thayer N."/>
            <person name="Tice H."/>
            <person name="Tsai M."/>
            <person name="Ustaszewska A."/>
            <person name="Vo N."/>
            <person name="Wagner M."/>
            <person name="Wheeler J."/>
            <person name="Wu K."/>
            <person name="Xie G."/>
            <person name="Yang J."/>
            <person name="Dubchak I."/>
            <person name="Furey T.S."/>
            <person name="DeJong P."/>
            <person name="Dickson M."/>
            <person name="Gordon D."/>
            <person name="Eichler E.E."/>
            <person name="Pennacchio L.A."/>
            <person name="Richardson P."/>
            <person name="Stubbs L."/>
            <person name="Rokhsar D.S."/>
            <person name="Myers R.M."/>
            <person name="Rubin E.M."/>
            <person name="Lucas S.M."/>
        </authorList>
    </citation>
    <scope>NUCLEOTIDE SEQUENCE [LARGE SCALE GENOMIC DNA]</scope>
</reference>
<reference key="3">
    <citation type="submission" date="2005-09" db="EMBL/GenBank/DDBJ databases">
        <authorList>
            <person name="Mural R.J."/>
            <person name="Istrail S."/>
            <person name="Sutton G."/>
            <person name="Florea L."/>
            <person name="Halpern A.L."/>
            <person name="Mobarry C.M."/>
            <person name="Lippert R."/>
            <person name="Walenz B."/>
            <person name="Shatkay H."/>
            <person name="Dew I."/>
            <person name="Miller J.R."/>
            <person name="Flanigan M.J."/>
            <person name="Edwards N.J."/>
            <person name="Bolanos R."/>
            <person name="Fasulo D."/>
            <person name="Halldorsson B.V."/>
            <person name="Hannenhalli S."/>
            <person name="Turner R."/>
            <person name="Yooseph S."/>
            <person name="Lu F."/>
            <person name="Nusskern D.R."/>
            <person name="Shue B.C."/>
            <person name="Zheng X.H."/>
            <person name="Zhong F."/>
            <person name="Delcher A.L."/>
            <person name="Huson D.H."/>
            <person name="Kravitz S.A."/>
            <person name="Mouchard L."/>
            <person name="Reinert K."/>
            <person name="Remington K.A."/>
            <person name="Clark A.G."/>
            <person name="Waterman M.S."/>
            <person name="Eichler E.E."/>
            <person name="Adams M.D."/>
            <person name="Hunkapiller M.W."/>
            <person name="Myers E.W."/>
            <person name="Venter J.C."/>
        </authorList>
    </citation>
    <scope>NUCLEOTIDE SEQUENCE [LARGE SCALE GENOMIC DNA]</scope>
</reference>
<reference key="4">
    <citation type="journal article" date="2004" name="Genome Res.">
        <title>The status, quality, and expansion of the NIH full-length cDNA project: the Mammalian Gene Collection (MGC).</title>
        <authorList>
            <consortium name="The MGC Project Team"/>
        </authorList>
    </citation>
    <scope>NUCLEOTIDE SEQUENCE [LARGE SCALE MRNA] (ISOFORMS 1; 2; 3 AND 4)</scope>
    <source>
        <tissue>B-cell</tissue>
        <tissue>Muscle</tissue>
        <tissue>Placenta</tissue>
        <tissue>Uterus</tissue>
    </source>
</reference>
<reference key="5">
    <citation type="journal article" date="1997" name="Oncogene">
        <title>Characterization, expression and chromosomal localization of a human gene homologous to the mouse Lsc oncogene, with strongest expression in hematopoetic tissues.</title>
        <authorList>
            <person name="Aasheim H.-C."/>
            <person name="Pedeutour F."/>
            <person name="Smeland E.B."/>
        </authorList>
    </citation>
    <scope>NUCLEOTIDE SEQUENCE [MRNA] OF 21-912 (ISOFORM 1)</scope>
    <scope>TISSUE SPECIFICITY</scope>
</reference>
<reference key="6">
    <citation type="submission" date="2003-05" db="EMBL/GenBank/DDBJ databases">
        <title>Cloning of human full-length CDSs in BD Creator(TM) system donor vector.</title>
        <authorList>
            <person name="Kalnine N."/>
            <person name="Chen X."/>
            <person name="Rolfs A."/>
            <person name="Halleck A."/>
            <person name="Hines L."/>
            <person name="Eisenstein S."/>
            <person name="Koundinya M."/>
            <person name="Raphael J."/>
            <person name="Moreira D."/>
            <person name="Kelley T."/>
            <person name="LaBaer J."/>
            <person name="Lin Y."/>
            <person name="Phelan M."/>
            <person name="Farmer A."/>
        </authorList>
    </citation>
    <scope>NUCLEOTIDE SEQUENCE [LARGE SCALE MRNA] OF 60-912 (ISOFORM 1)</scope>
</reference>
<reference key="7">
    <citation type="journal article" date="1998" name="Science">
        <title>p115 RhoGEF, a GTPase activating protein for Galpha12 and Galpha13.</title>
        <authorList>
            <person name="Kozasa T."/>
            <person name="Jiang X."/>
            <person name="Hart M.J."/>
            <person name="Sternweis P.M."/>
            <person name="Singer W.D."/>
            <person name="Gilman A.G."/>
            <person name="Bollag G."/>
            <person name="Sternweis P.C."/>
        </authorList>
    </citation>
    <scope>FUNCTION</scope>
</reference>
<reference key="8">
    <citation type="journal article" date="1998" name="Science">
        <title>Direct stimulation of the guanine nucleotide exchange activity of p115 RhoGEF by Galpha13.</title>
        <authorList>
            <person name="Hart M.J."/>
            <person name="Jiang X."/>
            <person name="Kozasa T."/>
            <person name="Roscoe W."/>
            <person name="Singer W.D."/>
            <person name="Gilman A.G."/>
            <person name="Sternweis P.C."/>
            <person name="Bollag G."/>
        </authorList>
    </citation>
    <scope>FUNCTION</scope>
    <scope>INTERACTION WITH GNA13</scope>
</reference>
<reference key="9">
    <citation type="journal article" date="2000" name="J. Biol. Chem.">
        <title>Galpha 13 requires palmitoylation for plasma membrane localization, Rho-dependent signaling, and promotion of p115-RhoGEF membrane binding.</title>
        <authorList>
            <person name="Bhattacharyya R."/>
            <person name="Wedegaertner P.B."/>
        </authorList>
    </citation>
    <scope>SUBCELLULAR LOCATION</scope>
</reference>
<reference key="10">
    <citation type="journal article" date="2002" name="J. Biol. Chem.">
        <title>Association of Lbc Rho guanine nucleotide exchange factor with alpha-catenin-related protein, alpha-catulin/CTNNAL1, supports serum response factor activation.</title>
        <authorList>
            <person name="Park B."/>
            <person name="Nguyen N.T."/>
            <person name="Dutt P."/>
            <person name="Merdek K.D."/>
            <person name="Bashar M."/>
            <person name="Sterpetti P."/>
            <person name="Tosolini A."/>
            <person name="Testa J.R."/>
            <person name="Toksoz D."/>
        </authorList>
    </citation>
    <scope>INTERACTION WITH CTNNAL1</scope>
</reference>
<reference key="11">
    <citation type="journal article" date="2003" name="J. Biol. Chem.">
        <title>PKCa-induced p115RhoGEF phosphorylation signals endothelial cytoskeletal rearrangement.</title>
        <authorList>
            <person name="Holinstat M."/>
            <person name="Mehta D."/>
            <person name="Kozasa T."/>
            <person name="Minshall R.D."/>
            <person name="Malik A.B."/>
        </authorList>
    </citation>
    <scope>PHOSPHORYLATION BY PKCA</scope>
</reference>
<reference key="12">
    <citation type="journal article" date="2006" name="Nat. Biotechnol.">
        <title>A probability-based approach for high-throughput protein phosphorylation analysis and site localization.</title>
        <authorList>
            <person name="Beausoleil S.A."/>
            <person name="Villen J."/>
            <person name="Gerber S.A."/>
            <person name="Rush J."/>
            <person name="Gygi S.P."/>
        </authorList>
    </citation>
    <scope>PHOSPHORYLATION [LARGE SCALE ANALYSIS] AT SER-863</scope>
    <scope>IDENTIFICATION BY MASS SPECTROMETRY [LARGE SCALE ANALYSIS]</scope>
    <source>
        <tissue>Cervix carcinoma</tissue>
    </source>
</reference>
<reference key="13">
    <citation type="journal article" date="2008" name="Proc. Natl. Acad. Sci. U.S.A.">
        <title>A quantitative atlas of mitotic phosphorylation.</title>
        <authorList>
            <person name="Dephoure N."/>
            <person name="Zhou C."/>
            <person name="Villen J."/>
            <person name="Beausoleil S.A."/>
            <person name="Bakalarski C.E."/>
            <person name="Elledge S.J."/>
            <person name="Gygi S.P."/>
        </authorList>
    </citation>
    <scope>IDENTIFICATION BY MASS SPECTROMETRY [LARGE SCALE ANALYSIS]</scope>
    <source>
        <tissue>Cervix carcinoma</tissue>
    </source>
</reference>
<reference key="14">
    <citation type="journal article" date="2009" name="Sci. Signal.">
        <title>Quantitative phosphoproteomic analysis of T cell receptor signaling reveals system-wide modulation of protein-protein interactions.</title>
        <authorList>
            <person name="Mayya V."/>
            <person name="Lundgren D.H."/>
            <person name="Hwang S.-I."/>
            <person name="Rezaul K."/>
            <person name="Wu L."/>
            <person name="Eng J.K."/>
            <person name="Rodionov V."/>
            <person name="Han D.K."/>
        </authorList>
    </citation>
    <scope>IDENTIFICATION BY MASS SPECTROMETRY [LARGE SCALE ANALYSIS]</scope>
    <source>
        <tissue>Leukemic T-cell</tissue>
    </source>
</reference>
<reference key="15">
    <citation type="journal article" date="2010" name="Nat. Med.">
        <title>The Rho exchange factor Arhgef1 mediates the effects of angiotensin II on vascular tone and blood pressure.</title>
        <authorList>
            <person name="Guilluy C."/>
            <person name="Bregeon J."/>
            <person name="Toumaniantz G."/>
            <person name="Rolli-Derkinderen M."/>
            <person name="Retailleau K."/>
            <person name="Loufrani L."/>
            <person name="Henrion D."/>
            <person name="Scalbert E."/>
            <person name="Bril A."/>
            <person name="Torres R.M."/>
            <person name="Offermanns S."/>
            <person name="Pacaud P."/>
            <person name="Loirand G."/>
        </authorList>
    </citation>
    <scope>FUNCTION</scope>
    <scope>PHOSPHORYLATION AT TYR-738</scope>
    <scope>MUTAGENESIS OF TYR-487 AND TYR-738</scope>
</reference>
<reference key="16">
    <citation type="journal article" date="2010" name="Sci. Signal.">
        <title>Quantitative phosphoproteomics reveals widespread full phosphorylation site occupancy during mitosis.</title>
        <authorList>
            <person name="Olsen J.V."/>
            <person name="Vermeulen M."/>
            <person name="Santamaria A."/>
            <person name="Kumar C."/>
            <person name="Miller M.L."/>
            <person name="Jensen L.J."/>
            <person name="Gnad F."/>
            <person name="Cox J."/>
            <person name="Jensen T.S."/>
            <person name="Nigg E.A."/>
            <person name="Brunak S."/>
            <person name="Mann M."/>
        </authorList>
    </citation>
    <scope>PHOSPHORYLATION [LARGE SCALE ANALYSIS] AT SER-863</scope>
    <scope>IDENTIFICATION BY MASS SPECTROMETRY [LARGE SCALE ANALYSIS]</scope>
    <source>
        <tissue>Cervix carcinoma</tissue>
    </source>
</reference>
<reference key="17">
    <citation type="journal article" date="2011" name="BMC Syst. Biol.">
        <title>Initial characterization of the human central proteome.</title>
        <authorList>
            <person name="Burkard T.R."/>
            <person name="Planyavsky M."/>
            <person name="Kaupe I."/>
            <person name="Breitwieser F.P."/>
            <person name="Buerckstuemmer T."/>
            <person name="Bennett K.L."/>
            <person name="Superti-Furga G."/>
            <person name="Colinge J."/>
        </authorList>
    </citation>
    <scope>IDENTIFICATION BY MASS SPECTROMETRY [LARGE SCALE ANALYSIS]</scope>
</reference>
<reference key="18">
    <citation type="journal article" date="2013" name="J. Proteome Res.">
        <title>Toward a comprehensive characterization of a human cancer cell phosphoproteome.</title>
        <authorList>
            <person name="Zhou H."/>
            <person name="Di Palma S."/>
            <person name="Preisinger C."/>
            <person name="Peng M."/>
            <person name="Polat A.N."/>
            <person name="Heck A.J."/>
            <person name="Mohammed S."/>
        </authorList>
    </citation>
    <scope>PHOSPHORYLATION [LARGE SCALE ANALYSIS] AT SER-409; THR-695 AND SER-863</scope>
    <scope>IDENTIFICATION BY MASS SPECTROMETRY [LARGE SCALE ANALYSIS]</scope>
    <source>
        <tissue>Cervix carcinoma</tissue>
        <tissue>Erythroleukemia</tissue>
    </source>
</reference>
<reference key="19">
    <citation type="journal article" date="2014" name="J. Proteomics">
        <title>An enzyme assisted RP-RPLC approach for in-depth analysis of human liver phosphoproteome.</title>
        <authorList>
            <person name="Bian Y."/>
            <person name="Song C."/>
            <person name="Cheng K."/>
            <person name="Dong M."/>
            <person name="Wang F."/>
            <person name="Huang J."/>
            <person name="Sun D."/>
            <person name="Wang L."/>
            <person name="Ye M."/>
            <person name="Zou H."/>
        </authorList>
    </citation>
    <scope>PHOSPHORYLATION [LARGE SCALE ANALYSIS] AT SER-374</scope>
    <scope>IDENTIFICATION BY MASS SPECTROMETRY [LARGE SCALE ANALYSIS]</scope>
    <source>
        <tissue>Liver</tissue>
    </source>
</reference>
<reference key="20">
    <citation type="journal article" date="2015" name="Proteomics">
        <title>N-terminome analysis of the human mitochondrial proteome.</title>
        <authorList>
            <person name="Vaca Jacome A.S."/>
            <person name="Rabilloud T."/>
            <person name="Schaeffer-Reiss C."/>
            <person name="Rompais M."/>
            <person name="Ayoub D."/>
            <person name="Lane L."/>
            <person name="Bairoch A."/>
            <person name="Van Dorsselaer A."/>
            <person name="Carapito C."/>
        </authorList>
    </citation>
    <scope>IDENTIFICATION BY MASS SPECTROMETRY [LARGE SCALE ANALYSIS]</scope>
</reference>
<reference key="21">
    <citation type="journal article" date="2001" name="Nat. Struct. Biol.">
        <title>Structure of the rgRGS domain of p115RhoGEF.</title>
        <authorList>
            <person name="Chen Z."/>
            <person name="Wells C.D."/>
            <person name="Sternweis P.C."/>
            <person name="Sprang S.R."/>
        </authorList>
    </citation>
    <scope>X-RAY CRYSTALLOGRAPHY (1.9 ANGSTROMS) OF 42-252</scope>
</reference>
<reference key="22">
    <citation type="journal article" date="2006" name="Science">
        <title>The consensus coding sequences of human breast and colorectal cancers.</title>
        <authorList>
            <person name="Sjoeblom T."/>
            <person name="Jones S."/>
            <person name="Wood L.D."/>
            <person name="Parsons D.W."/>
            <person name="Lin J."/>
            <person name="Barber T.D."/>
            <person name="Mandelker D."/>
            <person name="Leary R.J."/>
            <person name="Ptak J."/>
            <person name="Silliman N."/>
            <person name="Szabo S."/>
            <person name="Buckhaults P."/>
            <person name="Farrell C."/>
            <person name="Meeh P."/>
            <person name="Markowitz S.D."/>
            <person name="Willis J."/>
            <person name="Dawson D."/>
            <person name="Willson J.K.V."/>
            <person name="Gazdar A.F."/>
            <person name="Hartigan J."/>
            <person name="Wu L."/>
            <person name="Liu C."/>
            <person name="Parmigiani G."/>
            <person name="Park B.H."/>
            <person name="Bachman K.E."/>
            <person name="Papadopoulos N."/>
            <person name="Vogelstein B."/>
            <person name="Kinzler K.W."/>
            <person name="Velculescu V.E."/>
        </authorList>
    </citation>
    <scope>VARIANT [LARGE SCALE ANALYSIS] VAL-165</scope>
</reference>
<reference key="23">
    <citation type="journal article" date="2019" name="J. Clin. Invest.">
        <title>Loss of ARHGEF1 causes a human primary antibody deficiency.</title>
        <authorList>
            <person name="Bouafia A."/>
            <person name="Lofek S."/>
            <person name="Bruneau J."/>
            <person name="Chentout L."/>
            <person name="Lamrini H."/>
            <person name="Trinquand A."/>
            <person name="Deau M.C."/>
            <person name="Heurtier L."/>
            <person name="Meignin V."/>
            <person name="Picard C."/>
            <person name="Macintyre E."/>
            <person name="Alibeu O."/>
            <person name="Bras M."/>
            <person name="Molina T.J."/>
            <person name="Cavazzana M."/>
            <person name="Andre-Schmutz I."/>
            <person name="Durandy A."/>
            <person name="Fischer A."/>
            <person name="Oksenhendler E."/>
            <person name="Kracker S."/>
        </authorList>
    </citation>
    <scope>INVOLVEMENT IN IMD62</scope>
    <scope>VARIANT IMD62 285-ARG--THR-912 DEL</scope>
    <scope>CHARACTERIZATION OF VARIANT IMD62 285-ARG--THR-912 DEL</scope>
    <scope>FUNCTION</scope>
</reference>
<feature type="chain" id="PRO_0000080906" description="Rho guanine nucleotide exchange factor 1">
    <location>
        <begin position="1"/>
        <end position="912"/>
    </location>
</feature>
<feature type="domain" description="RGSL">
    <location>
        <begin position="41"/>
        <end position="232"/>
    </location>
</feature>
<feature type="domain" description="DH" evidence="4">
    <location>
        <begin position="416"/>
        <end position="605"/>
    </location>
</feature>
<feature type="domain" description="PH" evidence="5">
    <location>
        <begin position="647"/>
        <end position="760"/>
    </location>
</feature>
<feature type="region of interest" description="Disordered" evidence="6">
    <location>
        <begin position="248"/>
        <end position="413"/>
    </location>
</feature>
<feature type="region of interest" description="Disordered" evidence="6">
    <location>
        <begin position="763"/>
        <end position="802"/>
    </location>
</feature>
<feature type="region of interest" description="Disordered" evidence="6">
    <location>
        <begin position="841"/>
        <end position="865"/>
    </location>
</feature>
<feature type="coiled-coil region" evidence="3">
    <location>
        <begin position="865"/>
        <end position="896"/>
    </location>
</feature>
<feature type="compositionally biased region" description="Basic and acidic residues" evidence="6">
    <location>
        <begin position="283"/>
        <end position="313"/>
    </location>
</feature>
<feature type="compositionally biased region" description="Acidic residues" evidence="6">
    <location>
        <begin position="365"/>
        <end position="381"/>
    </location>
</feature>
<feature type="compositionally biased region" description="Low complexity" evidence="6">
    <location>
        <begin position="777"/>
        <end position="789"/>
    </location>
</feature>
<feature type="modified residue" description="Phosphoserine" evidence="22">
    <location>
        <position position="374"/>
    </location>
</feature>
<feature type="modified residue" description="Phosphoserine" evidence="21">
    <location>
        <position position="409"/>
    </location>
</feature>
<feature type="modified residue" description="Phosphothreonine" evidence="21">
    <location>
        <position position="695"/>
    </location>
</feature>
<feature type="modified residue" description="Phosphotyrosine; by JAK2" evidence="11">
    <location>
        <position position="738"/>
    </location>
</feature>
<feature type="modified residue" description="Phosphoserine" evidence="19 20 21">
    <location>
        <position position="863"/>
    </location>
</feature>
<feature type="splice variant" id="VSP_037766" description="In isoform 3 and isoform 4." evidence="17">
    <original>M</original>
    <variation>MASLSTWSSPAEPREM</variation>
    <location>
        <position position="1"/>
    </location>
</feature>
<feature type="splice variant" id="VSP_008125" description="In isoform 2 and isoform 4." evidence="17">
    <location>
        <begin position="76"/>
        <end position="108"/>
    </location>
</feature>
<feature type="splice variant" id="VSP_057289" description="In isoform 4." evidence="17">
    <original>VLSLKQLLFPAEEDNGAGPPRDGDGVPGGGPLSPARTQEIQENLLSLEETMKQLEELEEEFCRLRPLLSQLGGNSVPQPGCT</original>
    <variation>GVGGGILPPETPPVSAWGELCPPAWLHLRFPPRKAFCKKERNGGEDVRDHPHPHSCRSISHPEGLRRGSCGPRLGGAQLGLLAPHEPRPSLPPALCLGDSGLHSGGHHGDPGHLSIACGGHPSTPTPKCLRSVFIP</variation>
    <location>
        <begin position="831"/>
        <end position="912"/>
    </location>
</feature>
<feature type="sequence variant" id="VAR_035969" description="In a colorectal cancer sample; somatic mutation." evidence="10">
    <original>M</original>
    <variation>V</variation>
    <location>
        <position position="165"/>
    </location>
</feature>
<feature type="sequence variant" id="VAR_082652" description="In IMD62; impairs RhoA GTPase activation and GNA12- and GNA13-mediated signaling; reduces actin polymerization; dbSNP:rs1568815169." evidence="12">
    <location>
        <begin position="285"/>
        <end position="912"/>
    </location>
</feature>
<feature type="sequence variant" id="VAR_033521" description="In dbSNP:rs2303797.">
    <original>P</original>
    <variation>L</variation>
    <location>
        <position position="375"/>
    </location>
</feature>
<feature type="mutagenesis site" description="No effect." evidence="11">
    <original>Y</original>
    <variation>F</variation>
    <location>
        <position position="487"/>
    </location>
</feature>
<feature type="mutagenesis site" description="Lowers the exchange activity." evidence="11">
    <original>Y</original>
    <variation>F</variation>
    <location>
        <position position="738"/>
    </location>
</feature>
<feature type="sequence conflict" description="In Ref. 1; AAB17896." evidence="18" ref="1">
    <original>EPA</original>
    <variation>DPP</variation>
    <location>
        <begin position="257"/>
        <end position="259"/>
    </location>
</feature>
<feature type="sequence conflict" description="In Ref. 5; CAA70356." evidence="18" ref="5">
    <original>VGMP</original>
    <variation>GGDA</variation>
    <location>
        <begin position="305"/>
        <end position="308"/>
    </location>
</feature>
<feature type="sequence conflict" description="In Ref. 5; CAA70356." evidence="18" ref="5">
    <location>
        <position position="339"/>
    </location>
</feature>
<feature type="sequence conflict" description="In Ref. 5; CAA70356." evidence="18" ref="5">
    <original>LGDSSPQ</original>
    <variation>PGGLIPA</variation>
    <location>
        <begin position="346"/>
        <end position="352"/>
    </location>
</feature>
<feature type="sequence conflict" description="In Ref. 5; CAA70356." evidence="18" ref="5">
    <original>C</original>
    <variation>S</variation>
    <location>
        <position position="549"/>
    </location>
</feature>
<feature type="sequence conflict" description="In Ref. 5; CAA70356." evidence="18" ref="5">
    <original>C</original>
    <variation>S</variation>
    <location>
        <position position="752"/>
    </location>
</feature>
<feature type="sequence conflict" description="In Ref. 1; AAB17896." evidence="18" ref="1">
    <original>S</original>
    <variation>R</variation>
    <location>
        <position position="776"/>
    </location>
</feature>
<feature type="sequence conflict" description="In Ref. 5; CAA70356." evidence="18" ref="5">
    <original>L</original>
    <variation>R</variation>
    <location>
        <position position="862"/>
    </location>
</feature>
<feature type="sequence conflict" description="In Ref. 5; CAA70356." evidence="18" ref="5">
    <original>S</original>
    <variation>R</variation>
    <location>
        <position position="876"/>
    </location>
</feature>
<feature type="sequence conflict" description="In Ref. 5; CAA70356." evidence="18" ref="5">
    <original>Q</original>
    <variation>T</variation>
    <location>
        <position position="883"/>
    </location>
</feature>
<feature type="strand" evidence="24">
    <location>
        <begin position="18"/>
        <end position="20"/>
    </location>
</feature>
<feature type="turn" evidence="25">
    <location>
        <begin position="26"/>
        <end position="33"/>
    </location>
</feature>
<feature type="helix" evidence="23">
    <location>
        <begin position="49"/>
        <end position="52"/>
    </location>
</feature>
<feature type="helix" evidence="23">
    <location>
        <begin position="56"/>
        <end position="69"/>
    </location>
</feature>
<feature type="helix" evidence="23">
    <location>
        <begin position="73"/>
        <end position="84"/>
    </location>
</feature>
<feature type="helix" evidence="23">
    <location>
        <begin position="89"/>
        <end position="103"/>
    </location>
</feature>
<feature type="helix" evidence="23">
    <location>
        <begin position="116"/>
        <end position="122"/>
    </location>
</feature>
<feature type="turn" evidence="23">
    <location>
        <begin position="127"/>
        <end position="129"/>
    </location>
</feature>
<feature type="helix" evidence="23">
    <location>
        <begin position="132"/>
        <end position="144"/>
    </location>
</feature>
<feature type="helix" evidence="23">
    <location>
        <begin position="147"/>
        <end position="162"/>
    </location>
</feature>
<feature type="helix" evidence="23">
    <location>
        <begin position="169"/>
        <end position="176"/>
    </location>
</feature>
<feature type="helix" evidence="23">
    <location>
        <begin position="183"/>
        <end position="203"/>
    </location>
</feature>
<feature type="helix" evidence="23">
    <location>
        <begin position="205"/>
        <end position="207"/>
    </location>
</feature>
<feature type="helix" evidence="23">
    <location>
        <begin position="212"/>
        <end position="228"/>
    </location>
</feature>
<feature type="turn" evidence="26">
    <location>
        <begin position="399"/>
        <end position="401"/>
    </location>
</feature>
<feature type="helix" evidence="26">
    <location>
        <begin position="404"/>
        <end position="407"/>
    </location>
</feature>
<feature type="helix" evidence="28">
    <location>
        <begin position="413"/>
        <end position="441"/>
    </location>
</feature>
<feature type="helix" evidence="28">
    <location>
        <begin position="443"/>
        <end position="449"/>
    </location>
</feature>
<feature type="helix" evidence="28">
    <location>
        <begin position="454"/>
        <end position="460"/>
    </location>
</feature>
<feature type="helix" evidence="28">
    <location>
        <begin position="464"/>
        <end position="484"/>
    </location>
</feature>
<feature type="helix" evidence="28">
    <location>
        <begin position="493"/>
        <end position="500"/>
    </location>
</feature>
<feature type="helix" evidence="28">
    <location>
        <begin position="502"/>
        <end position="517"/>
    </location>
</feature>
<feature type="helix" evidence="28">
    <location>
        <begin position="519"/>
        <end position="532"/>
    </location>
</feature>
<feature type="helix" evidence="28">
    <location>
        <begin position="534"/>
        <end position="544"/>
    </location>
</feature>
<feature type="helix" evidence="28">
    <location>
        <begin position="547"/>
        <end position="549"/>
    </location>
</feature>
<feature type="helix" evidence="28">
    <location>
        <begin position="554"/>
        <end position="557"/>
    </location>
</feature>
<feature type="helix" evidence="28">
    <location>
        <begin position="560"/>
        <end position="577"/>
    </location>
</feature>
<feature type="helix" evidence="28">
    <location>
        <begin position="582"/>
        <end position="621"/>
    </location>
</feature>
<feature type="helix" evidence="28">
    <location>
        <begin position="625"/>
        <end position="629"/>
    </location>
</feature>
<feature type="helix" evidence="28">
    <location>
        <begin position="633"/>
        <end position="635"/>
    </location>
</feature>
<feature type="strand" evidence="28">
    <location>
        <begin position="636"/>
        <end position="638"/>
    </location>
</feature>
<feature type="strand" evidence="27">
    <location>
        <begin position="644"/>
        <end position="646"/>
    </location>
</feature>
<feature type="strand" evidence="28">
    <location>
        <begin position="648"/>
        <end position="661"/>
    </location>
</feature>
<feature type="strand" evidence="28">
    <location>
        <begin position="663"/>
        <end position="681"/>
    </location>
</feature>
<feature type="strand" evidence="28">
    <location>
        <begin position="684"/>
        <end position="686"/>
    </location>
</feature>
<feature type="strand" evidence="26">
    <location>
        <begin position="694"/>
        <end position="697"/>
    </location>
</feature>
<feature type="strand" evidence="28">
    <location>
        <begin position="706"/>
        <end position="709"/>
    </location>
</feature>
<feature type="helix" evidence="28">
    <location>
        <begin position="710"/>
        <end position="712"/>
    </location>
</feature>
<feature type="strand" evidence="28">
    <location>
        <begin position="713"/>
        <end position="717"/>
    </location>
</feature>
<feature type="strand" evidence="26">
    <location>
        <begin position="719"/>
        <end position="721"/>
    </location>
</feature>
<feature type="strand" evidence="28">
    <location>
        <begin position="724"/>
        <end position="729"/>
    </location>
</feature>
<feature type="strand" evidence="28">
    <location>
        <begin position="737"/>
        <end position="741"/>
    </location>
</feature>
<feature type="helix" evidence="28">
    <location>
        <begin position="745"/>
        <end position="760"/>
    </location>
</feature>